<accession>Q0J2L7</accession>
<accession>A0A0P0XLQ8</accession>
<accession>Q6K3W4</accession>
<comment type="function">
    <text evidence="4 9">Involved in the regulation of abiotic stress responses (PubMed:25886365). Acts as a negative regulator of abscisic acid (ABA) signaling and positive regulator of abiotic stress signaling (PubMed:25886365). May be involved in panicle development (Probable).</text>
</comment>
<comment type="catalytic activity">
    <reaction>
        <text>O-phospho-L-seryl-[protein] + H2O = L-seryl-[protein] + phosphate</text>
        <dbReference type="Rhea" id="RHEA:20629"/>
        <dbReference type="Rhea" id="RHEA-COMP:9863"/>
        <dbReference type="Rhea" id="RHEA-COMP:11604"/>
        <dbReference type="ChEBI" id="CHEBI:15377"/>
        <dbReference type="ChEBI" id="CHEBI:29999"/>
        <dbReference type="ChEBI" id="CHEBI:43474"/>
        <dbReference type="ChEBI" id="CHEBI:83421"/>
        <dbReference type="EC" id="3.1.3.16"/>
    </reaction>
</comment>
<comment type="catalytic activity">
    <reaction>
        <text>O-phospho-L-threonyl-[protein] + H2O = L-threonyl-[protein] + phosphate</text>
        <dbReference type="Rhea" id="RHEA:47004"/>
        <dbReference type="Rhea" id="RHEA-COMP:11060"/>
        <dbReference type="Rhea" id="RHEA-COMP:11605"/>
        <dbReference type="ChEBI" id="CHEBI:15377"/>
        <dbReference type="ChEBI" id="CHEBI:30013"/>
        <dbReference type="ChEBI" id="CHEBI:43474"/>
        <dbReference type="ChEBI" id="CHEBI:61977"/>
        <dbReference type="EC" id="3.1.3.16"/>
    </reaction>
</comment>
<comment type="cofactor">
    <cofactor evidence="1">
        <name>Mg(2+)</name>
        <dbReference type="ChEBI" id="CHEBI:18420"/>
    </cofactor>
    <cofactor evidence="1">
        <name>Mn(2+)</name>
        <dbReference type="ChEBI" id="CHEBI:29035"/>
    </cofactor>
    <text evidence="1">Binds 2 magnesium or manganese ions per subunit.</text>
</comment>
<comment type="subcellular location">
    <subcellularLocation>
        <location evidence="3 4">Nucleus</location>
    </subcellularLocation>
    <subcellularLocation>
        <location evidence="4">Cytoplasm</location>
        <location evidence="4">Cytosol</location>
    </subcellularLocation>
    <text evidence="4">Localizes predominantly in the nucleus and partially in the cytosol.</text>
</comment>
<comment type="developmental stage">
    <text evidence="3">Expressed transiently during early panicle development.</text>
</comment>
<comment type="induction">
    <text evidence="3 4">Induced by salt, osmotic and cold stresses (PubMed:23086454, PubMed:25886365). Induced by abscisic acid (ABA) (PubMed:23086454, PubMed:25886365).</text>
</comment>
<comment type="miscellaneous">
    <text evidence="4">Plants overexpressing P2C68 exhibit insensitivity to abscisic acid (ABA), and tolerance to high salt and mannitol stresses during seed germination, root growth and overall seedling growth (PubMed:25886365). At adult stage, P2C68 overexpression leads to high tolerance to salt, mannitol and drought stresses with far better physiological parameters such as water loss, fresh weight, chlorophyll content and photosynthetic potential (PubMed:25886365).</text>
</comment>
<comment type="similarity">
    <text evidence="8">Belongs to the PP2C family.</text>
</comment>
<comment type="sequence caution" evidence="8">
    <conflict type="erroneous initiation">
        <sequence resource="EMBL-CDS" id="BAD23456"/>
    </conflict>
    <text>Truncated N-terminus.</text>
</comment>
<comment type="sequence caution" evidence="8">
    <conflict type="erroneous initiation">
        <sequence resource="EMBL-CDS" id="EAZ44262"/>
    </conflict>
    <text>Truncated N-terminus.</text>
</comment>
<proteinExistence type="evidence at transcript level"/>
<sequence length="358" mass="37705">MSMAEVCCDSAVVVGAEAEARARARAGRRRRAGVEGAGRWNATATAAGVAAEEAATRKRRASGGEAGLVVVAKRHGAASVAGRRREMEDAVSLREAFAAPANGEVAAARCDFYGVFDGHGCSHVADACRERMHELVAEEMGAGSPAAAAREPASWTETMERSFARMDAEVIAGCRAESGSCRCEGQKCDHVGSTAVVAVVEESRVVVANCGDSRAVLCRGGAPVQLSSDHKPDRPDELERIEAAGGRVIFWEGARVLGVLAMSRSIGDAYLKPYVTAVPEVTVTGRSDFDECLILASDGLWDVVSNEAACEVAQSCLRRGRQRWCAEAAAVLTKLALARRSSDNISVVVVDLRRGNAL</sequence>
<feature type="chain" id="PRO_0000363315" description="Probable protein phosphatase 2C 68">
    <location>
        <begin position="1"/>
        <end position="358"/>
    </location>
</feature>
<feature type="domain" description="PPM-type phosphatase" evidence="2">
    <location>
        <begin position="74"/>
        <end position="352"/>
    </location>
</feature>
<feature type="binding site" evidence="1">
    <location>
        <position position="117"/>
    </location>
    <ligand>
        <name>Mn(2+)</name>
        <dbReference type="ChEBI" id="CHEBI:29035"/>
        <label>1</label>
    </ligand>
</feature>
<feature type="binding site" evidence="1">
    <location>
        <position position="117"/>
    </location>
    <ligand>
        <name>Mn(2+)</name>
        <dbReference type="ChEBI" id="CHEBI:29035"/>
        <label>2</label>
    </ligand>
</feature>
<feature type="binding site" evidence="1">
    <location>
        <position position="118"/>
    </location>
    <ligand>
        <name>Mn(2+)</name>
        <dbReference type="ChEBI" id="CHEBI:29035"/>
        <label>1</label>
    </ligand>
</feature>
<feature type="binding site" evidence="1">
    <location>
        <position position="298"/>
    </location>
    <ligand>
        <name>Mn(2+)</name>
        <dbReference type="ChEBI" id="CHEBI:29035"/>
        <label>2</label>
    </ligand>
</feature>
<feature type="binding site" evidence="1">
    <location>
        <position position="343"/>
    </location>
    <ligand>
        <name>Mn(2+)</name>
        <dbReference type="ChEBI" id="CHEBI:29035"/>
        <label>2</label>
    </ligand>
</feature>
<feature type="sequence conflict" description="In Ref. 5; AK063334." evidence="8" ref="5">
    <location>
        <position position="350"/>
    </location>
</feature>
<name>P2C68_ORYSJ</name>
<keyword id="KW-0963">Cytoplasm</keyword>
<keyword id="KW-0378">Hydrolase</keyword>
<keyword id="KW-0460">Magnesium</keyword>
<keyword id="KW-0464">Manganese</keyword>
<keyword id="KW-0479">Metal-binding</keyword>
<keyword id="KW-0539">Nucleus</keyword>
<keyword id="KW-0904">Protein phosphatase</keyword>
<keyword id="KW-1185">Reference proteome</keyword>
<keyword id="KW-0346">Stress response</keyword>
<reference key="1">
    <citation type="journal article" date="2005" name="Nature">
        <title>The map-based sequence of the rice genome.</title>
        <authorList>
            <consortium name="International rice genome sequencing project (IRGSP)"/>
        </authorList>
    </citation>
    <scope>NUCLEOTIDE SEQUENCE [LARGE SCALE GENOMIC DNA]</scope>
    <source>
        <strain>cv. Nipponbare</strain>
    </source>
</reference>
<reference key="2">
    <citation type="journal article" date="2008" name="Nucleic Acids Res.">
        <title>The rice annotation project database (RAP-DB): 2008 update.</title>
        <authorList>
            <consortium name="The rice annotation project (RAP)"/>
        </authorList>
    </citation>
    <scope>GENOME REANNOTATION</scope>
    <source>
        <strain>cv. Nipponbare</strain>
    </source>
</reference>
<reference key="3">
    <citation type="journal article" date="2013" name="Rice">
        <title>Improvement of the Oryza sativa Nipponbare reference genome using next generation sequence and optical map data.</title>
        <authorList>
            <person name="Kawahara Y."/>
            <person name="de la Bastide M."/>
            <person name="Hamilton J.P."/>
            <person name="Kanamori H."/>
            <person name="McCombie W.R."/>
            <person name="Ouyang S."/>
            <person name="Schwartz D.C."/>
            <person name="Tanaka T."/>
            <person name="Wu J."/>
            <person name="Zhou S."/>
            <person name="Childs K.L."/>
            <person name="Davidson R.M."/>
            <person name="Lin H."/>
            <person name="Quesada-Ocampo L."/>
            <person name="Vaillancourt B."/>
            <person name="Sakai H."/>
            <person name="Lee S.S."/>
            <person name="Kim J."/>
            <person name="Numa H."/>
            <person name="Itoh T."/>
            <person name="Buell C.R."/>
            <person name="Matsumoto T."/>
        </authorList>
    </citation>
    <scope>GENOME REANNOTATION</scope>
    <source>
        <strain>cv. Nipponbare</strain>
    </source>
</reference>
<reference key="4">
    <citation type="journal article" date="2005" name="PLoS Biol.">
        <title>The genomes of Oryza sativa: a history of duplications.</title>
        <authorList>
            <person name="Yu J."/>
            <person name="Wang J."/>
            <person name="Lin W."/>
            <person name="Li S."/>
            <person name="Li H."/>
            <person name="Zhou J."/>
            <person name="Ni P."/>
            <person name="Dong W."/>
            <person name="Hu S."/>
            <person name="Zeng C."/>
            <person name="Zhang J."/>
            <person name="Zhang Y."/>
            <person name="Li R."/>
            <person name="Xu Z."/>
            <person name="Li S."/>
            <person name="Li X."/>
            <person name="Zheng H."/>
            <person name="Cong L."/>
            <person name="Lin L."/>
            <person name="Yin J."/>
            <person name="Geng J."/>
            <person name="Li G."/>
            <person name="Shi J."/>
            <person name="Liu J."/>
            <person name="Lv H."/>
            <person name="Li J."/>
            <person name="Wang J."/>
            <person name="Deng Y."/>
            <person name="Ran L."/>
            <person name="Shi X."/>
            <person name="Wang X."/>
            <person name="Wu Q."/>
            <person name="Li C."/>
            <person name="Ren X."/>
            <person name="Wang J."/>
            <person name="Wang X."/>
            <person name="Li D."/>
            <person name="Liu D."/>
            <person name="Zhang X."/>
            <person name="Ji Z."/>
            <person name="Zhao W."/>
            <person name="Sun Y."/>
            <person name="Zhang Z."/>
            <person name="Bao J."/>
            <person name="Han Y."/>
            <person name="Dong L."/>
            <person name="Ji J."/>
            <person name="Chen P."/>
            <person name="Wu S."/>
            <person name="Liu J."/>
            <person name="Xiao Y."/>
            <person name="Bu D."/>
            <person name="Tan J."/>
            <person name="Yang L."/>
            <person name="Ye C."/>
            <person name="Zhang J."/>
            <person name="Xu J."/>
            <person name="Zhou Y."/>
            <person name="Yu Y."/>
            <person name="Zhang B."/>
            <person name="Zhuang S."/>
            <person name="Wei H."/>
            <person name="Liu B."/>
            <person name="Lei M."/>
            <person name="Yu H."/>
            <person name="Li Y."/>
            <person name="Xu H."/>
            <person name="Wei S."/>
            <person name="He X."/>
            <person name="Fang L."/>
            <person name="Zhang Z."/>
            <person name="Zhang Y."/>
            <person name="Huang X."/>
            <person name="Su Z."/>
            <person name="Tong W."/>
            <person name="Li J."/>
            <person name="Tong Z."/>
            <person name="Li S."/>
            <person name="Ye J."/>
            <person name="Wang L."/>
            <person name="Fang L."/>
            <person name="Lei T."/>
            <person name="Chen C.-S."/>
            <person name="Chen H.-C."/>
            <person name="Xu Z."/>
            <person name="Li H."/>
            <person name="Huang H."/>
            <person name="Zhang F."/>
            <person name="Xu H."/>
            <person name="Li N."/>
            <person name="Zhao C."/>
            <person name="Li S."/>
            <person name="Dong L."/>
            <person name="Huang Y."/>
            <person name="Li L."/>
            <person name="Xi Y."/>
            <person name="Qi Q."/>
            <person name="Li W."/>
            <person name="Zhang B."/>
            <person name="Hu W."/>
            <person name="Zhang Y."/>
            <person name="Tian X."/>
            <person name="Jiao Y."/>
            <person name="Liang X."/>
            <person name="Jin J."/>
            <person name="Gao L."/>
            <person name="Zheng W."/>
            <person name="Hao B."/>
            <person name="Liu S.-M."/>
            <person name="Wang W."/>
            <person name="Yuan L."/>
            <person name="Cao M."/>
            <person name="McDermott J."/>
            <person name="Samudrala R."/>
            <person name="Wang J."/>
            <person name="Wong G.K.-S."/>
            <person name="Yang H."/>
        </authorList>
    </citation>
    <scope>NUCLEOTIDE SEQUENCE [LARGE SCALE GENOMIC DNA]</scope>
    <source>
        <strain>cv. Nipponbare</strain>
    </source>
</reference>
<reference key="5">
    <citation type="journal article" date="2003" name="Science">
        <title>Collection, mapping, and annotation of over 28,000 cDNA clones from japonica rice.</title>
        <authorList>
            <consortium name="The rice full-length cDNA consortium"/>
        </authorList>
    </citation>
    <scope>NUCLEOTIDE SEQUENCE [LARGE SCALE MRNA]</scope>
    <source>
        <strain>cv. Nipponbare</strain>
    </source>
</reference>
<reference key="6">
    <citation type="journal article" date="2008" name="BMC Genomics">
        <title>Genome-wide and expression analysis of protein phosphatase 2C in rice and Arabidopsis.</title>
        <authorList>
            <person name="Xue T."/>
            <person name="Wang D."/>
            <person name="Zhang S."/>
            <person name="Ehlting J."/>
            <person name="Ni F."/>
            <person name="Jacab S."/>
            <person name="Zheng C."/>
            <person name="Zhong Y."/>
        </authorList>
    </citation>
    <scope>GENE FAMILY</scope>
    <scope>NOMENCLATURE</scope>
</reference>
<reference key="7">
    <citation type="journal article" date="2013" name="Mol. Biotechnol.">
        <title>A novel nuclear protein phosphatase 2C negatively regulated by ABL1 is involved in abiotic stress and panicle development in rice.</title>
        <authorList>
            <person name="Li Y.S."/>
            <person name="Sun H."/>
            <person name="Wang Z.F."/>
            <person name="Duan M."/>
            <person name="Huang S.D."/>
            <person name="Yang J."/>
            <person name="Huang J."/>
            <person name="Zhang H.S."/>
        </authorList>
    </citation>
    <scope>FUNCTION</scope>
    <scope>SUBCELLULAR LOCATION</scope>
    <scope>DEVELOPMENTAL STAGE</scope>
    <scope>INDUCTION</scope>
</reference>
<reference key="8">
    <citation type="journal article" date="2015" name="PLoS ONE">
        <title>ABA inducible rice protein phosphatase 2C confers ABA insensitivity and abiotic stress tolerance in Arabidopsis.</title>
        <authorList>
            <person name="Singh A."/>
            <person name="Jha S.K."/>
            <person name="Bagri J."/>
            <person name="Pandey G.K."/>
        </authorList>
    </citation>
    <scope>FUNCTION</scope>
    <scope>SUBCELLULAR LOCATION</scope>
    <scope>INDUCTION</scope>
</reference>
<dbReference type="EC" id="3.1.3.16"/>
<dbReference type="EMBL" id="AP005593">
    <property type="protein sequence ID" value="BAD23456.1"/>
    <property type="status" value="ALT_INIT"/>
    <property type="molecule type" value="Genomic_DNA"/>
</dbReference>
<dbReference type="EMBL" id="AP008215">
    <property type="protein sequence ID" value="BAF24795.2"/>
    <property type="molecule type" value="Genomic_DNA"/>
</dbReference>
<dbReference type="EMBL" id="AP014965">
    <property type="protein sequence ID" value="BAT07481.1"/>
    <property type="molecule type" value="Genomic_DNA"/>
</dbReference>
<dbReference type="EMBL" id="CM000146">
    <property type="protein sequence ID" value="EAZ44262.1"/>
    <property type="status" value="ALT_INIT"/>
    <property type="molecule type" value="Genomic_DNA"/>
</dbReference>
<dbReference type="EMBL" id="AK063334">
    <property type="status" value="NOT_ANNOTATED_CDS"/>
    <property type="molecule type" value="mRNA"/>
</dbReference>
<dbReference type="RefSeq" id="NP_001409658.1">
    <property type="nucleotide sequence ID" value="NM_001422729.1"/>
</dbReference>
<dbReference type="RefSeq" id="XP_015611887.1">
    <property type="nucleotide sequence ID" value="XM_015756401.1"/>
</dbReference>
<dbReference type="SMR" id="Q0J2L7"/>
<dbReference type="FunCoup" id="Q0J2L7">
    <property type="interactions" value="188"/>
</dbReference>
<dbReference type="STRING" id="39947.Q0J2L7"/>
<dbReference type="PaxDb" id="39947-Q0J2L7"/>
<dbReference type="EnsemblPlants" id="Os09t0325700-01">
    <property type="protein sequence ID" value="Os09t0325700-01"/>
    <property type="gene ID" value="Os09g0325700"/>
</dbReference>
<dbReference type="GeneID" id="4346736"/>
<dbReference type="Gramene" id="Os09t0325700-01">
    <property type="protein sequence ID" value="Os09t0325700-01"/>
    <property type="gene ID" value="Os09g0325700"/>
</dbReference>
<dbReference type="KEGG" id="dosa:Os09g0325700"/>
<dbReference type="eggNOG" id="KOG0698">
    <property type="taxonomic scope" value="Eukaryota"/>
</dbReference>
<dbReference type="HOGENOM" id="CLU_013173_20_0_1"/>
<dbReference type="InParanoid" id="Q0J2L7"/>
<dbReference type="OMA" id="SWTETME"/>
<dbReference type="OrthoDB" id="10264738at2759"/>
<dbReference type="PlantReactome" id="R-OSA-3899351">
    <property type="pathway name" value="Abscisic acid (ABA) mediated signaling"/>
</dbReference>
<dbReference type="Proteomes" id="UP000000763">
    <property type="component" value="Chromosome 9"/>
</dbReference>
<dbReference type="Proteomes" id="UP000007752">
    <property type="component" value="Chromosome 9"/>
</dbReference>
<dbReference type="Proteomes" id="UP000059680">
    <property type="component" value="Chromosome 9"/>
</dbReference>
<dbReference type="GO" id="GO:0005829">
    <property type="term" value="C:cytosol"/>
    <property type="evidence" value="ECO:0007669"/>
    <property type="project" value="UniProtKB-SubCell"/>
</dbReference>
<dbReference type="GO" id="GO:0005634">
    <property type="term" value="C:nucleus"/>
    <property type="evidence" value="ECO:0000318"/>
    <property type="project" value="GO_Central"/>
</dbReference>
<dbReference type="GO" id="GO:0046872">
    <property type="term" value="F:metal ion binding"/>
    <property type="evidence" value="ECO:0007669"/>
    <property type="project" value="UniProtKB-KW"/>
</dbReference>
<dbReference type="GO" id="GO:0004722">
    <property type="term" value="F:protein serine/threonine phosphatase activity"/>
    <property type="evidence" value="ECO:0000318"/>
    <property type="project" value="GO_Central"/>
</dbReference>
<dbReference type="GO" id="GO:1902531">
    <property type="term" value="P:regulation of intracellular signal transduction"/>
    <property type="evidence" value="ECO:0000318"/>
    <property type="project" value="GO_Central"/>
</dbReference>
<dbReference type="CDD" id="cd00143">
    <property type="entry name" value="PP2Cc"/>
    <property type="match status" value="1"/>
</dbReference>
<dbReference type="FunFam" id="3.60.40.10:FF:000046">
    <property type="entry name" value="Probable protein phosphatase 2C 9"/>
    <property type="match status" value="1"/>
</dbReference>
<dbReference type="Gene3D" id="3.60.40.10">
    <property type="entry name" value="PPM-type phosphatase domain"/>
    <property type="match status" value="1"/>
</dbReference>
<dbReference type="InterPro" id="IPR015655">
    <property type="entry name" value="PP2C"/>
</dbReference>
<dbReference type="InterPro" id="IPR000222">
    <property type="entry name" value="PP2C_BS"/>
</dbReference>
<dbReference type="InterPro" id="IPR036457">
    <property type="entry name" value="PPM-type-like_dom_sf"/>
</dbReference>
<dbReference type="InterPro" id="IPR001932">
    <property type="entry name" value="PPM-type_phosphatase-like_dom"/>
</dbReference>
<dbReference type="PANTHER" id="PTHR47992">
    <property type="entry name" value="PROTEIN PHOSPHATASE"/>
    <property type="match status" value="1"/>
</dbReference>
<dbReference type="Pfam" id="PF00481">
    <property type="entry name" value="PP2C"/>
    <property type="match status" value="1"/>
</dbReference>
<dbReference type="SMART" id="SM00331">
    <property type="entry name" value="PP2C_SIG"/>
    <property type="match status" value="1"/>
</dbReference>
<dbReference type="SMART" id="SM00332">
    <property type="entry name" value="PP2Cc"/>
    <property type="match status" value="1"/>
</dbReference>
<dbReference type="SUPFAM" id="SSF81606">
    <property type="entry name" value="PP2C-like"/>
    <property type="match status" value="1"/>
</dbReference>
<dbReference type="PROSITE" id="PS01032">
    <property type="entry name" value="PPM_1"/>
    <property type="match status" value="1"/>
</dbReference>
<dbReference type="PROSITE" id="PS51746">
    <property type="entry name" value="PPM_2"/>
    <property type="match status" value="1"/>
</dbReference>
<evidence type="ECO:0000250" key="1">
    <source>
        <dbReference type="UniProtKB" id="Q9CAJ0"/>
    </source>
</evidence>
<evidence type="ECO:0000255" key="2">
    <source>
        <dbReference type="PROSITE-ProRule" id="PRU01082"/>
    </source>
</evidence>
<evidence type="ECO:0000269" key="3">
    <source>
    </source>
</evidence>
<evidence type="ECO:0000269" key="4">
    <source>
    </source>
</evidence>
<evidence type="ECO:0000303" key="5">
    <source>
    </source>
</evidence>
<evidence type="ECO:0000303" key="6">
    <source>
    </source>
</evidence>
<evidence type="ECO:0000303" key="7">
    <source>
    </source>
</evidence>
<evidence type="ECO:0000305" key="8"/>
<evidence type="ECO:0000305" key="9">
    <source>
    </source>
</evidence>
<evidence type="ECO:0000312" key="10">
    <source>
        <dbReference type="EMBL" id="BAD23456.1"/>
    </source>
</evidence>
<evidence type="ECO:0000312" key="11">
    <source>
        <dbReference type="EMBL" id="BAT07481.1"/>
    </source>
</evidence>
<evidence type="ECO:0000312" key="12">
    <source>
        <dbReference type="EMBL" id="EAZ44262.1"/>
    </source>
</evidence>
<gene>
    <name evidence="5" type="primary">PP2C68</name>
    <name evidence="7" type="synonym">PP108</name>
    <name evidence="6" type="synonym">SIPP2C1</name>
    <name evidence="11" type="ordered locus">Os09g0325700</name>
    <name evidence="8" type="ordered locus">LOC_Os09g15670</name>
    <name evidence="12" type="ORF">OsJ_027745</name>
    <name evidence="10" type="ORF">P0692F07.24</name>
</gene>
<protein>
    <recommendedName>
        <fullName evidence="5">Probable protein phosphatase 2C 68</fullName>
        <shortName evidence="5">OsPP2C68</shortName>
        <ecNumber>3.1.3.16</ecNumber>
    </recommendedName>
    <alternativeName>
        <fullName evidence="7">OsPP108</fullName>
    </alternativeName>
    <alternativeName>
        <fullName evidence="6">Stress-induced protein phosphatase 2C 1</fullName>
        <shortName evidence="6">OsSIPP2C1</shortName>
    </alternativeName>
</protein>
<organism>
    <name type="scientific">Oryza sativa subsp. japonica</name>
    <name type="common">Rice</name>
    <dbReference type="NCBI Taxonomy" id="39947"/>
    <lineage>
        <taxon>Eukaryota</taxon>
        <taxon>Viridiplantae</taxon>
        <taxon>Streptophyta</taxon>
        <taxon>Embryophyta</taxon>
        <taxon>Tracheophyta</taxon>
        <taxon>Spermatophyta</taxon>
        <taxon>Magnoliopsida</taxon>
        <taxon>Liliopsida</taxon>
        <taxon>Poales</taxon>
        <taxon>Poaceae</taxon>
        <taxon>BOP clade</taxon>
        <taxon>Oryzoideae</taxon>
        <taxon>Oryzeae</taxon>
        <taxon>Oryzinae</taxon>
        <taxon>Oryza</taxon>
        <taxon>Oryza sativa</taxon>
    </lineage>
</organism>